<gene>
    <name evidence="6" type="primary">iq4c7</name>
</gene>
<proteinExistence type="evidence at protein level"/>
<feature type="signal peptide" evidence="7">
    <location>
        <begin position="1" status="less than"/>
        <end position="9"/>
    </location>
</feature>
<feature type="propeptide" id="PRO_0000453029" evidence="8">
    <location>
        <begin position="10"/>
        <end position="17"/>
    </location>
</feature>
<feature type="chain" id="PRO_0000453030" description="PI-stichotoxin-Hcr2j" evidence="8">
    <location>
        <begin position="18"/>
        <end position="72"/>
    </location>
</feature>
<feature type="domain" description="BPTI/Kunitz inhibitor" evidence="3">
    <location>
        <begin position="20"/>
        <end position="70"/>
    </location>
</feature>
<feature type="site" description="Reactive bond for trypsin" evidence="2">
    <location>
        <begin position="30"/>
        <end position="31"/>
    </location>
</feature>
<feature type="site" description="Important for the stabilization when complexed with trypsin" evidence="1">
    <location>
        <position position="61"/>
    </location>
</feature>
<feature type="disulfide bond" evidence="2">
    <location>
        <begin position="20"/>
        <end position="70"/>
    </location>
</feature>
<feature type="disulfide bond" evidence="2">
    <location>
        <begin position="29"/>
        <end position="53"/>
    </location>
</feature>
<feature type="disulfide bond" evidence="2">
    <location>
        <begin position="45"/>
        <end position="66"/>
    </location>
</feature>
<feature type="non-terminal residue" evidence="9">
    <location>
        <position position="1"/>
    </location>
</feature>
<reference key="1">
    <citation type="journal article" date="2020" name="Sci. Rep.">
        <title>A new multigene HCIQ subfamily from the sea anemone Heteractis crispa encodes Kunitz-peptides exhibiting neuroprotective activity against 6-hydroxydopamine.</title>
        <authorList>
            <person name="Kvetkina A."/>
            <person name="Leychenko E."/>
            <person name="Chausova V."/>
            <person name="Zelepuga E."/>
            <person name="Chernysheva N."/>
            <person name="Guzev K."/>
            <person name="Pislyagin E."/>
            <person name="Yurchenko E."/>
            <person name="Menchinskaya E."/>
            <person name="Aminin D."/>
            <person name="Kaluzhskiy L."/>
            <person name="Ivanov A."/>
            <person name="Peigneur S."/>
            <person name="Tytgat J."/>
            <person name="Kozlovskaya E."/>
            <person name="Isaeva M."/>
        </authorList>
    </citation>
    <scope>NUCLEOTIDE SEQUENCE [MRNA]</scope>
    <scope>FUNCTION</scope>
    <scope>RECOMBINANT EXPRESSION</scope>
</reference>
<reference key="2">
    <citation type="journal article" date="2022" name="Int. J. Mol. Sci.">
        <title>Kunitz-type peptides from sea anemones protect neuronal cells against parkinson's disease inductors via inhibition of ROS production and atp-induced P2X7 receptor activation.</title>
        <authorList>
            <person name="Kvetkina A."/>
            <person name="Pislyagin E."/>
            <person name="Menchinskaya E."/>
            <person name="Yurchenko E."/>
            <person name="Kalina R."/>
            <person name="Kozlovskiy S."/>
            <person name="Kaluzhskiy L."/>
            <person name="Menshov A."/>
            <person name="Kim N."/>
            <person name="Peigneur S."/>
            <person name="Tytgat J."/>
            <person name="Ivanov A."/>
            <person name="Ayvazyan N."/>
            <person name="Leychenko E."/>
            <person name="Aminin D."/>
        </authorList>
    </citation>
    <scope>FUNCTION</scope>
    <scope>3D-STRUCTURE MODELING IN COMPLEX WITH TRYPSIN</scope>
    <scope>BIOPHYSICOCHEMICAL PROPERTIES</scope>
</reference>
<name>VKT2J_RADCR</name>
<dbReference type="EMBL" id="MH249939">
    <property type="protein sequence ID" value="QBA29488.1"/>
    <property type="molecule type" value="mRNA"/>
</dbReference>
<dbReference type="SMR" id="A0A6B7FA07"/>
<dbReference type="GO" id="GO:0005615">
    <property type="term" value="C:extracellular space"/>
    <property type="evidence" value="ECO:0007669"/>
    <property type="project" value="TreeGrafter"/>
</dbReference>
<dbReference type="GO" id="GO:0042151">
    <property type="term" value="C:nematocyst"/>
    <property type="evidence" value="ECO:0007669"/>
    <property type="project" value="UniProtKB-SubCell"/>
</dbReference>
<dbReference type="GO" id="GO:0099106">
    <property type="term" value="F:ion channel regulator activity"/>
    <property type="evidence" value="ECO:0007669"/>
    <property type="project" value="UniProtKB-KW"/>
</dbReference>
<dbReference type="GO" id="GO:0004867">
    <property type="term" value="F:serine-type endopeptidase inhibitor activity"/>
    <property type="evidence" value="ECO:0007669"/>
    <property type="project" value="UniProtKB-KW"/>
</dbReference>
<dbReference type="GO" id="GO:0090729">
    <property type="term" value="F:toxin activity"/>
    <property type="evidence" value="ECO:0007669"/>
    <property type="project" value="UniProtKB-KW"/>
</dbReference>
<dbReference type="CDD" id="cd22618">
    <property type="entry name" value="Kunitz_SHPI"/>
    <property type="match status" value="1"/>
</dbReference>
<dbReference type="FunFam" id="4.10.410.10:FF:000021">
    <property type="entry name" value="Serine protease inhibitor, putative"/>
    <property type="match status" value="1"/>
</dbReference>
<dbReference type="Gene3D" id="4.10.410.10">
    <property type="entry name" value="Pancreatic trypsin inhibitor Kunitz domain"/>
    <property type="match status" value="1"/>
</dbReference>
<dbReference type="InterPro" id="IPR002223">
    <property type="entry name" value="Kunitz_BPTI"/>
</dbReference>
<dbReference type="InterPro" id="IPR036880">
    <property type="entry name" value="Kunitz_BPTI_sf"/>
</dbReference>
<dbReference type="InterPro" id="IPR020901">
    <property type="entry name" value="Prtase_inh_Kunz-CS"/>
</dbReference>
<dbReference type="InterPro" id="IPR050098">
    <property type="entry name" value="TFPI/VKTCI-like"/>
</dbReference>
<dbReference type="PANTHER" id="PTHR10083:SF374">
    <property type="entry name" value="BPTI_KUNITZ INHIBITOR DOMAIN-CONTAINING PROTEIN"/>
    <property type="match status" value="1"/>
</dbReference>
<dbReference type="PANTHER" id="PTHR10083">
    <property type="entry name" value="KUNITZ-TYPE PROTEASE INHIBITOR-RELATED"/>
    <property type="match status" value="1"/>
</dbReference>
<dbReference type="Pfam" id="PF00014">
    <property type="entry name" value="Kunitz_BPTI"/>
    <property type="match status" value="1"/>
</dbReference>
<dbReference type="PRINTS" id="PR00759">
    <property type="entry name" value="BASICPTASE"/>
</dbReference>
<dbReference type="SMART" id="SM00131">
    <property type="entry name" value="KU"/>
    <property type="match status" value="1"/>
</dbReference>
<dbReference type="SUPFAM" id="SSF57362">
    <property type="entry name" value="BPTI-like"/>
    <property type="match status" value="1"/>
</dbReference>
<dbReference type="PROSITE" id="PS00280">
    <property type="entry name" value="BPTI_KUNITZ_1"/>
    <property type="match status" value="1"/>
</dbReference>
<dbReference type="PROSITE" id="PS50279">
    <property type="entry name" value="BPTI_KUNITZ_2"/>
    <property type="match status" value="1"/>
</dbReference>
<organism>
    <name type="scientific">Radianthus crispa</name>
    <name type="common">Leathery sea anemone</name>
    <name type="synonym">Heteractis crispa</name>
    <dbReference type="NCBI Taxonomy" id="3122430"/>
    <lineage>
        <taxon>Eukaryota</taxon>
        <taxon>Metazoa</taxon>
        <taxon>Cnidaria</taxon>
        <taxon>Anthozoa</taxon>
        <taxon>Hexacorallia</taxon>
        <taxon>Actiniaria</taxon>
        <taxon>Stichodactylidae</taxon>
        <taxon>Radianthus</taxon>
    </lineage>
</organism>
<protein>
    <recommendedName>
        <fullName evidence="7">PI-stichotoxin-Hcr2j</fullName>
        <shortName evidence="7">PI-SHTX-Hcr2j</shortName>
    </recommendedName>
    <alternativeName>
        <fullName evidence="6">Kunitz-peptide HCIQ4c7</fullName>
    </alternativeName>
</protein>
<sequence length="72" mass="8206">GFYFRSIQGFYFKRIQGNICSEPKKVGRCRESFPRFYFDSETGKCTPFIYGGCGGNGNNFETLHACRAICRA</sequence>
<evidence type="ECO:0000250" key="1">
    <source>
        <dbReference type="UniProtKB" id="P0DMJ5"/>
    </source>
</evidence>
<evidence type="ECO:0000250" key="2">
    <source>
        <dbReference type="UniProtKB" id="P31713"/>
    </source>
</evidence>
<evidence type="ECO:0000255" key="3">
    <source>
        <dbReference type="PROSITE-ProRule" id="PRU00031"/>
    </source>
</evidence>
<evidence type="ECO:0000269" key="4">
    <source>
    </source>
</evidence>
<evidence type="ECO:0000269" key="5">
    <source>
    </source>
</evidence>
<evidence type="ECO:0000303" key="6">
    <source>
    </source>
</evidence>
<evidence type="ECO:0000305" key="7"/>
<evidence type="ECO:0000305" key="8">
    <source>
    </source>
</evidence>
<evidence type="ECO:0000312" key="9">
    <source>
        <dbReference type="EMBL" id="QBA29488.1"/>
    </source>
</evidence>
<comment type="function">
    <text evidence="4 5">Serine protease inhibitor that acts on trypsin (Ki=190 nM) and to elastase (PubMed:32144281). Does not bind to alpha-chymotrypsin, cathepsin G, and kallikrein (PubMed:32144281). It significantly increases neuroblastoma cell viability in an in vitro neurotoxicity model, being a consequence of an effective decrease of reactive oxygen species (ROS) level in the cells (PubMed:35563513). It also protects cells by inhibiting ATP-induced purinoceptor activation (PubMed:35563513). Its binding affinity to P2RX7 is moderate (Kd=45.5 uM) (PubMed:35563513).</text>
</comment>
<comment type="biophysicochemical properties">
    <temperatureDependence>
        <text evidence="5">Thermostable. Optimum temperature is 25 degrees Celsius. The ability to inhibit trypsin slowly decreases as the temperature increases to 7% inhibition at 100 degrees Celsius.</text>
    </temperatureDependence>
</comment>
<comment type="subcellular location">
    <subcellularLocation>
        <location evidence="2">Secreted</location>
    </subcellularLocation>
    <subcellularLocation>
        <location evidence="2">Nematocyst</location>
    </subcellularLocation>
</comment>
<comment type="miscellaneous">
    <text evidence="4 5">Negative results: does not show activity on all potassium channel tested (Kv1.1/KCNA1, Kv1.2/KCNA2, Kv1.3/KCNA3, Kv1.4/KCNA4, Kv1.5/KCNA5, Kv1.6/KCNA8, Shaker IR, and Kv11.1/KCNH2/ERG1) (PubMed:32144281). Does not exert any effects on TRPV1 channels (PubMed:35563513).</text>
</comment>
<comment type="miscellaneous">
    <text evidence="7">A synonymy between H.magnifica and R.crispa is controversial.</text>
</comment>
<comment type="similarity">
    <text evidence="7">Belongs to the venom Kunitz-type family. Sea anemone type 2 potassium channel toxin subfamily.</text>
</comment>
<accession>A0A6B7FA07</accession>
<keyword id="KW-0165">Cleavage on pair of basic residues</keyword>
<keyword id="KW-1015">Disulfide bond</keyword>
<keyword id="KW-0872">Ion channel impairing toxin</keyword>
<keyword id="KW-0166">Nematocyst</keyword>
<keyword id="KW-0646">Protease inhibitor</keyword>
<keyword id="KW-0964">Secreted</keyword>
<keyword id="KW-0722">Serine protease inhibitor</keyword>
<keyword id="KW-0732">Signal</keyword>
<keyword id="KW-0800">Toxin</keyword>